<name>FGGY_XENLA</name>
<organism>
    <name type="scientific">Xenopus laevis</name>
    <name type="common">African clawed frog</name>
    <dbReference type="NCBI Taxonomy" id="8355"/>
    <lineage>
        <taxon>Eukaryota</taxon>
        <taxon>Metazoa</taxon>
        <taxon>Chordata</taxon>
        <taxon>Craniata</taxon>
        <taxon>Vertebrata</taxon>
        <taxon>Euteleostomi</taxon>
        <taxon>Amphibia</taxon>
        <taxon>Batrachia</taxon>
        <taxon>Anura</taxon>
        <taxon>Pipoidea</taxon>
        <taxon>Pipidae</taxon>
        <taxon>Xenopodinae</taxon>
        <taxon>Xenopus</taxon>
        <taxon>Xenopus</taxon>
    </lineage>
</organism>
<gene>
    <name type="primary">fggy</name>
</gene>
<comment type="similarity">
    <text evidence="1">Belongs to the FGGY kinase family.</text>
</comment>
<comment type="sequence caution" evidence="1">
    <conflict type="erroneous initiation">
        <sequence resource="EMBL-CDS" id="AAH78117"/>
    </conflict>
</comment>
<evidence type="ECO:0000305" key="1"/>
<dbReference type="EC" id="2.7.1.-"/>
<dbReference type="EMBL" id="BC078117">
    <property type="protein sequence ID" value="AAH78117.1"/>
    <property type="status" value="ALT_INIT"/>
    <property type="molecule type" value="mRNA"/>
</dbReference>
<dbReference type="RefSeq" id="NP_001087170.2">
    <property type="nucleotide sequence ID" value="NM_001093701.1"/>
</dbReference>
<dbReference type="SMR" id="Q6DCD1"/>
<dbReference type="DNASU" id="447059"/>
<dbReference type="GeneID" id="447059"/>
<dbReference type="KEGG" id="xla:447059"/>
<dbReference type="AGR" id="Xenbase:XB-GENE-5811020"/>
<dbReference type="CTD" id="447059"/>
<dbReference type="Xenbase" id="XB-GENE-5811020">
    <property type="gene designation" value="fggy.L"/>
</dbReference>
<dbReference type="OrthoDB" id="203824at2759"/>
<dbReference type="Proteomes" id="UP000186698">
    <property type="component" value="Chromosome 4L"/>
</dbReference>
<dbReference type="Bgee" id="447059">
    <property type="expression patterns" value="Expressed in pancreas and 17 other cell types or tissues"/>
</dbReference>
<dbReference type="GO" id="GO:0005737">
    <property type="term" value="C:cytoplasm"/>
    <property type="evidence" value="ECO:0000318"/>
    <property type="project" value="GO_Central"/>
</dbReference>
<dbReference type="GO" id="GO:0019150">
    <property type="term" value="F:D-ribulokinase activity"/>
    <property type="evidence" value="ECO:0000318"/>
    <property type="project" value="GO_Central"/>
</dbReference>
<dbReference type="GO" id="GO:0019321">
    <property type="term" value="P:pentose metabolic process"/>
    <property type="evidence" value="ECO:0000318"/>
    <property type="project" value="GO_Central"/>
</dbReference>
<dbReference type="CDD" id="cd07782">
    <property type="entry name" value="ASKHA_NBD_FGGY_D-RBK"/>
    <property type="match status" value="1"/>
</dbReference>
<dbReference type="FunFam" id="1.20.58.2240:FF:000002">
    <property type="entry name" value="FGGY carbohydrate kinase domain-containing protein"/>
    <property type="match status" value="1"/>
</dbReference>
<dbReference type="FunFam" id="3.30.420.40:FF:000101">
    <property type="entry name" value="FGGY carbohydrate kinase domain-containing protein"/>
    <property type="match status" value="1"/>
</dbReference>
<dbReference type="Gene3D" id="1.20.58.2240">
    <property type="match status" value="1"/>
</dbReference>
<dbReference type="Gene3D" id="3.30.420.40">
    <property type="match status" value="1"/>
</dbReference>
<dbReference type="InterPro" id="IPR043129">
    <property type="entry name" value="ATPase_NBD"/>
</dbReference>
<dbReference type="InterPro" id="IPR000577">
    <property type="entry name" value="Carb_kinase_FGGY"/>
</dbReference>
<dbReference type="InterPro" id="IPR018485">
    <property type="entry name" value="FGGY_C"/>
</dbReference>
<dbReference type="InterPro" id="IPR018484">
    <property type="entry name" value="FGGY_N"/>
</dbReference>
<dbReference type="InterPro" id="IPR006003">
    <property type="entry name" value="FGGY_RbtK-like"/>
</dbReference>
<dbReference type="NCBIfam" id="TIGR01315">
    <property type="entry name" value="5C_CHO_kinase"/>
    <property type="match status" value="1"/>
</dbReference>
<dbReference type="PANTHER" id="PTHR43435:SF4">
    <property type="entry name" value="FGGY CARBOHYDRATE KINASE DOMAIN-CONTAINING PROTEIN"/>
    <property type="match status" value="1"/>
</dbReference>
<dbReference type="PANTHER" id="PTHR43435">
    <property type="entry name" value="RIBULOKINASE"/>
    <property type="match status" value="1"/>
</dbReference>
<dbReference type="Pfam" id="PF02782">
    <property type="entry name" value="FGGY_C"/>
    <property type="match status" value="1"/>
</dbReference>
<dbReference type="Pfam" id="PF00370">
    <property type="entry name" value="FGGY_N"/>
    <property type="match status" value="1"/>
</dbReference>
<dbReference type="PIRSF" id="PIRSF000538">
    <property type="entry name" value="GlpK"/>
    <property type="match status" value="1"/>
</dbReference>
<dbReference type="SUPFAM" id="SSF53067">
    <property type="entry name" value="Actin-like ATPase domain"/>
    <property type="match status" value="2"/>
</dbReference>
<accession>Q6DCD1</accession>
<protein>
    <recommendedName>
        <fullName>FGGY carbohydrate kinase domain-containing protein</fullName>
        <ecNumber>2.7.1.-</ecNumber>
    </recommendedName>
</protein>
<sequence length="550" mass="60716">MQQQKGEEVYYVGIDVGTASVRVALVDQFGTVVDQVEQSIKIWEPQPDHYEQSSDDIWAACCQVTKQVVRTKDPRCIRGLGFDATCSLVVLDTQFQPLAVNSQGEHKRNIIMWMDHRAGCQVDRINRTNHKVLRYVGGVMSVEMQPPKLLWLKENLREECWNKSGQLFDLPDFLTWKATGDNTRSFCTLVCKWTYSLDHGWDDSFWKEIGLEDICEGNYVKIGNQVMSPGASIGNCLTATAAKELGLPEGLPVAASLIDAHAGGLGVIGASLKEYGLEGENHPITSRLALICGTSSCHMGISEKPIFVPGVWGPYYSAMIPGLWLNEGGQSATGKLIDHVVHGHIAFMELENQAKARGQHIYTYLNNHLDKIKKSGPVGFLAADLHVWPDFHGNRSPLADLTMKGMVVGLTLSKSLDDLATLYLATIQAIALGTRHILETMQTAGHHISTLYLCGGLSKNPLFVQMHADITGLPVVLSKEVESVLVGAAILGACASGDFPSIKEAMEKMSKVGKIIFPNHEDKRFYDKKYEVFLKLSSHQKEYQAIMGRM</sequence>
<proteinExistence type="evidence at transcript level"/>
<keyword id="KW-0418">Kinase</keyword>
<keyword id="KW-1185">Reference proteome</keyword>
<keyword id="KW-0808">Transferase</keyword>
<feature type="chain" id="PRO_0000326455" description="FGGY carbohydrate kinase domain-containing protein">
    <location>
        <begin position="1"/>
        <end position="550"/>
    </location>
</feature>
<reference key="1">
    <citation type="submission" date="2004-07" db="EMBL/GenBank/DDBJ databases">
        <authorList>
            <consortium name="NIH - Xenopus Gene Collection (XGC) project"/>
        </authorList>
    </citation>
    <scope>NUCLEOTIDE SEQUENCE [LARGE SCALE MRNA]</scope>
    <source>
        <tissue>Oocyte</tissue>
    </source>
</reference>